<accession>O75177</accession>
<accession>A6NNE3</accession>
<accession>A8K620</accession>
<accession>B3KWR8</accession>
<accession>E1P5H7</accession>
<accession>Q5JXJ3</accession>
<accession>Q6MZV9</accession>
<accession>Q6NTH3</accession>
<accession>Q6XYD9</accession>
<accession>Q8NE69</accession>
<accession>Q9BR55</accession>
<accession>Q9H4K6</accession>
<reference key="1">
    <citation type="journal article" date="1998" name="DNA Res.">
        <title>Prediction of the coding sequences of unidentified human genes. X. The complete sequences of 100 new cDNA clones from brain which can code for large proteins in vitro.</title>
        <authorList>
            <person name="Ishikawa K."/>
            <person name="Nagase T."/>
            <person name="Suyama M."/>
            <person name="Miyajima N."/>
            <person name="Tanaka A."/>
            <person name="Kotani H."/>
            <person name="Nomura N."/>
            <person name="Ohara O."/>
        </authorList>
    </citation>
    <scope>NUCLEOTIDE SEQUENCE [LARGE SCALE MRNA] (ISOFORM 1)</scope>
    <source>
        <tissue>Brain</tissue>
    </source>
</reference>
<reference key="2">
    <citation type="journal article" date="2001" name="Genome Res.">
        <title>Towards a catalog of human genes and proteins: sequencing and analysis of 500 novel complete protein coding human cDNAs.</title>
        <authorList>
            <person name="Wiemann S."/>
            <person name="Weil B."/>
            <person name="Wellenreuther R."/>
            <person name="Gassenhuber J."/>
            <person name="Glassl S."/>
            <person name="Ansorge W."/>
            <person name="Boecher M."/>
            <person name="Bloecker H."/>
            <person name="Bauersachs S."/>
            <person name="Blum H."/>
            <person name="Lauber J."/>
            <person name="Duesterhoeft A."/>
            <person name="Beyer A."/>
            <person name="Koehrer K."/>
            <person name="Strack N."/>
            <person name="Mewes H.-W."/>
            <person name="Ottenwaelder B."/>
            <person name="Obermaier B."/>
            <person name="Tampe J."/>
            <person name="Heubner D."/>
            <person name="Wambutt R."/>
            <person name="Korn B."/>
            <person name="Klein M."/>
            <person name="Poustka A."/>
        </authorList>
    </citation>
    <scope>NUCLEOTIDE SEQUENCE [LARGE SCALE MRNA] (ISOFORM 2)</scope>
    <source>
        <tissue>Small intestine</tissue>
    </source>
</reference>
<reference key="3">
    <citation type="submission" date="2002-12" db="EMBL/GenBank/DDBJ databases">
        <title>Novel Homo sapiens cDNA clones with function of promoting mice NIH/3T3 cells' growth.</title>
        <authorList>
            <person name="Wan D.F."/>
            <person name="Qin W.X."/>
            <person name="Zhou X.M."/>
            <person name="Zhang P.P."/>
            <person name="Jiang H.Q."/>
            <person name="Gu J.R."/>
        </authorList>
    </citation>
    <scope>NUCLEOTIDE SEQUENCE [LARGE SCALE MRNA] (ISOFORM 3)</scope>
</reference>
<reference key="4">
    <citation type="journal article" date="2004" name="Nat. Genet.">
        <title>Complete sequencing and characterization of 21,243 full-length human cDNAs.</title>
        <authorList>
            <person name="Ota T."/>
            <person name="Suzuki Y."/>
            <person name="Nishikawa T."/>
            <person name="Otsuki T."/>
            <person name="Sugiyama T."/>
            <person name="Irie R."/>
            <person name="Wakamatsu A."/>
            <person name="Hayashi K."/>
            <person name="Sato H."/>
            <person name="Nagai K."/>
            <person name="Kimura K."/>
            <person name="Makita H."/>
            <person name="Sekine M."/>
            <person name="Obayashi M."/>
            <person name="Nishi T."/>
            <person name="Shibahara T."/>
            <person name="Tanaka T."/>
            <person name="Ishii S."/>
            <person name="Yamamoto J."/>
            <person name="Saito K."/>
            <person name="Kawai Y."/>
            <person name="Isono Y."/>
            <person name="Nakamura Y."/>
            <person name="Nagahari K."/>
            <person name="Murakami K."/>
            <person name="Yasuda T."/>
            <person name="Iwayanagi T."/>
            <person name="Wagatsuma M."/>
            <person name="Shiratori A."/>
            <person name="Sudo H."/>
            <person name="Hosoiri T."/>
            <person name="Kaku Y."/>
            <person name="Kodaira H."/>
            <person name="Kondo H."/>
            <person name="Sugawara M."/>
            <person name="Takahashi M."/>
            <person name="Kanda K."/>
            <person name="Yokoi T."/>
            <person name="Furuya T."/>
            <person name="Kikkawa E."/>
            <person name="Omura Y."/>
            <person name="Abe K."/>
            <person name="Kamihara K."/>
            <person name="Katsuta N."/>
            <person name="Sato K."/>
            <person name="Tanikawa M."/>
            <person name="Yamazaki M."/>
            <person name="Ninomiya K."/>
            <person name="Ishibashi T."/>
            <person name="Yamashita H."/>
            <person name="Murakawa K."/>
            <person name="Fujimori K."/>
            <person name="Tanai H."/>
            <person name="Kimata M."/>
            <person name="Watanabe M."/>
            <person name="Hiraoka S."/>
            <person name="Chiba Y."/>
            <person name="Ishida S."/>
            <person name="Ono Y."/>
            <person name="Takiguchi S."/>
            <person name="Watanabe S."/>
            <person name="Yosida M."/>
            <person name="Hotuta T."/>
            <person name="Kusano J."/>
            <person name="Kanehori K."/>
            <person name="Takahashi-Fujii A."/>
            <person name="Hara H."/>
            <person name="Tanase T.-O."/>
            <person name="Nomura Y."/>
            <person name="Togiya S."/>
            <person name="Komai F."/>
            <person name="Hara R."/>
            <person name="Takeuchi K."/>
            <person name="Arita M."/>
            <person name="Imose N."/>
            <person name="Musashino K."/>
            <person name="Yuuki H."/>
            <person name="Oshima A."/>
            <person name="Sasaki N."/>
            <person name="Aotsuka S."/>
            <person name="Yoshikawa Y."/>
            <person name="Matsunawa H."/>
            <person name="Ichihara T."/>
            <person name="Shiohata N."/>
            <person name="Sano S."/>
            <person name="Moriya S."/>
            <person name="Momiyama H."/>
            <person name="Satoh N."/>
            <person name="Takami S."/>
            <person name="Terashima Y."/>
            <person name="Suzuki O."/>
            <person name="Nakagawa S."/>
            <person name="Senoh A."/>
            <person name="Mizoguchi H."/>
            <person name="Goto Y."/>
            <person name="Shimizu F."/>
            <person name="Wakebe H."/>
            <person name="Hishigaki H."/>
            <person name="Watanabe T."/>
            <person name="Sugiyama A."/>
            <person name="Takemoto M."/>
            <person name="Kawakami B."/>
            <person name="Yamazaki M."/>
            <person name="Watanabe K."/>
            <person name="Kumagai A."/>
            <person name="Itakura S."/>
            <person name="Fukuzumi Y."/>
            <person name="Fujimori Y."/>
            <person name="Komiyama M."/>
            <person name="Tashiro H."/>
            <person name="Tanigami A."/>
            <person name="Fujiwara T."/>
            <person name="Ono T."/>
            <person name="Yamada K."/>
            <person name="Fujii Y."/>
            <person name="Ozaki K."/>
            <person name="Hirao M."/>
            <person name="Ohmori Y."/>
            <person name="Kawabata A."/>
            <person name="Hikiji T."/>
            <person name="Kobatake N."/>
            <person name="Inagaki H."/>
            <person name="Ikema Y."/>
            <person name="Okamoto S."/>
            <person name="Okitani R."/>
            <person name="Kawakami T."/>
            <person name="Noguchi S."/>
            <person name="Itoh T."/>
            <person name="Shigeta K."/>
            <person name="Senba T."/>
            <person name="Matsumura K."/>
            <person name="Nakajima Y."/>
            <person name="Mizuno T."/>
            <person name="Morinaga M."/>
            <person name="Sasaki M."/>
            <person name="Togashi T."/>
            <person name="Oyama M."/>
            <person name="Hata H."/>
            <person name="Watanabe M."/>
            <person name="Komatsu T."/>
            <person name="Mizushima-Sugano J."/>
            <person name="Satoh T."/>
            <person name="Shirai Y."/>
            <person name="Takahashi Y."/>
            <person name="Nakagawa K."/>
            <person name="Okumura K."/>
            <person name="Nagase T."/>
            <person name="Nomura N."/>
            <person name="Kikuchi H."/>
            <person name="Masuho Y."/>
            <person name="Yamashita R."/>
            <person name="Nakai K."/>
            <person name="Yada T."/>
            <person name="Nakamura Y."/>
            <person name="Ohara O."/>
            <person name="Isogai T."/>
            <person name="Sugano S."/>
        </authorList>
    </citation>
    <scope>NUCLEOTIDE SEQUENCE [LARGE SCALE MRNA] (ISOFORMS 1 AND 4)</scope>
    <source>
        <tissue>Brain</tissue>
        <tissue>Synovium</tissue>
    </source>
</reference>
<reference key="5">
    <citation type="journal article" date="2001" name="Nature">
        <title>The DNA sequence and comparative analysis of human chromosome 20.</title>
        <authorList>
            <person name="Deloukas P."/>
            <person name="Matthews L.H."/>
            <person name="Ashurst J.L."/>
            <person name="Burton J."/>
            <person name="Gilbert J.G.R."/>
            <person name="Jones M."/>
            <person name="Stavrides G."/>
            <person name="Almeida J.P."/>
            <person name="Babbage A.K."/>
            <person name="Bagguley C.L."/>
            <person name="Bailey J."/>
            <person name="Barlow K.F."/>
            <person name="Bates K.N."/>
            <person name="Beard L.M."/>
            <person name="Beare D.M."/>
            <person name="Beasley O.P."/>
            <person name="Bird C.P."/>
            <person name="Blakey S.E."/>
            <person name="Bridgeman A.M."/>
            <person name="Brown A.J."/>
            <person name="Buck D."/>
            <person name="Burrill W.D."/>
            <person name="Butler A.P."/>
            <person name="Carder C."/>
            <person name="Carter N.P."/>
            <person name="Chapman J.C."/>
            <person name="Clamp M."/>
            <person name="Clark G."/>
            <person name="Clark L.N."/>
            <person name="Clark S.Y."/>
            <person name="Clee C.M."/>
            <person name="Clegg S."/>
            <person name="Cobley V.E."/>
            <person name="Collier R.E."/>
            <person name="Connor R.E."/>
            <person name="Corby N.R."/>
            <person name="Coulson A."/>
            <person name="Coville G.J."/>
            <person name="Deadman R."/>
            <person name="Dhami P.D."/>
            <person name="Dunn M."/>
            <person name="Ellington A.G."/>
            <person name="Frankland J.A."/>
            <person name="Fraser A."/>
            <person name="French L."/>
            <person name="Garner P."/>
            <person name="Grafham D.V."/>
            <person name="Griffiths C."/>
            <person name="Griffiths M.N.D."/>
            <person name="Gwilliam R."/>
            <person name="Hall R.E."/>
            <person name="Hammond S."/>
            <person name="Harley J.L."/>
            <person name="Heath P.D."/>
            <person name="Ho S."/>
            <person name="Holden J.L."/>
            <person name="Howden P.J."/>
            <person name="Huckle E."/>
            <person name="Hunt A.R."/>
            <person name="Hunt S.E."/>
            <person name="Jekosch K."/>
            <person name="Johnson C.M."/>
            <person name="Johnson D."/>
            <person name="Kay M.P."/>
            <person name="Kimberley A.M."/>
            <person name="King A."/>
            <person name="Knights A."/>
            <person name="Laird G.K."/>
            <person name="Lawlor S."/>
            <person name="Lehvaeslaiho M.H."/>
            <person name="Leversha M.A."/>
            <person name="Lloyd C."/>
            <person name="Lloyd D.M."/>
            <person name="Lovell J.D."/>
            <person name="Marsh V.L."/>
            <person name="Martin S.L."/>
            <person name="McConnachie L.J."/>
            <person name="McLay K."/>
            <person name="McMurray A.A."/>
            <person name="Milne S.A."/>
            <person name="Mistry D."/>
            <person name="Moore M.J.F."/>
            <person name="Mullikin J.C."/>
            <person name="Nickerson T."/>
            <person name="Oliver K."/>
            <person name="Parker A."/>
            <person name="Patel R."/>
            <person name="Pearce T.A.V."/>
            <person name="Peck A.I."/>
            <person name="Phillimore B.J.C.T."/>
            <person name="Prathalingam S.R."/>
            <person name="Plumb R.W."/>
            <person name="Ramsay H."/>
            <person name="Rice C.M."/>
            <person name="Ross M.T."/>
            <person name="Scott C.E."/>
            <person name="Sehra H.K."/>
            <person name="Shownkeen R."/>
            <person name="Sims S."/>
            <person name="Skuce C.D."/>
            <person name="Smith M.L."/>
            <person name="Soderlund C."/>
            <person name="Steward C.A."/>
            <person name="Sulston J.E."/>
            <person name="Swann R.M."/>
            <person name="Sycamore N."/>
            <person name="Taylor R."/>
            <person name="Tee L."/>
            <person name="Thomas D.W."/>
            <person name="Thorpe A."/>
            <person name="Tracey A."/>
            <person name="Tromans A.C."/>
            <person name="Vaudin M."/>
            <person name="Wall M."/>
            <person name="Wallis J.M."/>
            <person name="Whitehead S.L."/>
            <person name="Whittaker P."/>
            <person name="Willey D.L."/>
            <person name="Williams L."/>
            <person name="Williams S.A."/>
            <person name="Wilming L."/>
            <person name="Wray P.W."/>
            <person name="Hubbard T."/>
            <person name="Durbin R.M."/>
            <person name="Bentley D.R."/>
            <person name="Beck S."/>
            <person name="Rogers J."/>
        </authorList>
    </citation>
    <scope>NUCLEOTIDE SEQUENCE [LARGE SCALE GENOMIC DNA]</scope>
</reference>
<reference key="6">
    <citation type="submission" date="2005-09" db="EMBL/GenBank/DDBJ databases">
        <authorList>
            <person name="Mural R.J."/>
            <person name="Istrail S."/>
            <person name="Sutton G.G."/>
            <person name="Florea L."/>
            <person name="Halpern A.L."/>
            <person name="Mobarry C.M."/>
            <person name="Lippert R."/>
            <person name="Walenz B."/>
            <person name="Shatkay H."/>
            <person name="Dew I."/>
            <person name="Miller J.R."/>
            <person name="Flanigan M.J."/>
            <person name="Edwards N.J."/>
            <person name="Bolanos R."/>
            <person name="Fasulo D."/>
            <person name="Halldorsson B.V."/>
            <person name="Hannenhalli S."/>
            <person name="Turner R."/>
            <person name="Yooseph S."/>
            <person name="Lu F."/>
            <person name="Nusskern D.R."/>
            <person name="Shue B.C."/>
            <person name="Zheng X.H."/>
            <person name="Zhong F."/>
            <person name="Delcher A.L."/>
            <person name="Huson D.H."/>
            <person name="Kravitz S.A."/>
            <person name="Mouchard L."/>
            <person name="Reinert K."/>
            <person name="Remington K.A."/>
            <person name="Clark A.G."/>
            <person name="Waterman M.S."/>
            <person name="Eichler E.E."/>
            <person name="Adams M.D."/>
            <person name="Hunkapiller M.W."/>
            <person name="Myers E.W."/>
            <person name="Venter J.C."/>
        </authorList>
    </citation>
    <scope>NUCLEOTIDE SEQUENCE [LARGE SCALE GENOMIC DNA]</scope>
</reference>
<reference key="7">
    <citation type="journal article" date="2004" name="Genome Res.">
        <title>The status, quality, and expansion of the NIH full-length cDNA project: the Mammalian Gene Collection (MGC).</title>
        <authorList>
            <consortium name="The MGC Project Team"/>
        </authorList>
    </citation>
    <scope>NUCLEOTIDE SEQUENCE [LARGE SCALE MRNA] (ISOFORMS 1 AND 5)</scope>
    <scope>VARIANT ILE-189</scope>
    <source>
        <tissue>Lymph</tissue>
        <tissue>Testis</tissue>
    </source>
</reference>
<reference key="8">
    <citation type="journal article" date="2008" name="Dev. Cell">
        <title>sSgo1, a major splice variant of Sgo1, functions in centriole cohesion where it is regulated by Plk1.</title>
        <authorList>
            <person name="Wang X."/>
            <person name="Yang Y."/>
            <person name="Duan Q."/>
            <person name="Jiang N."/>
            <person name="Huang Y."/>
            <person name="Darzynkiewicz Z."/>
            <person name="Dai W."/>
        </authorList>
    </citation>
    <scope>SUBCELLULAR LOCATION</scope>
</reference>
<name>CREST_HUMAN</name>
<proteinExistence type="evidence at protein level"/>
<protein>
    <recommendedName>
        <fullName>Calcium-responsive transactivator</fullName>
    </recommendedName>
    <alternativeName>
        <fullName>SS18-like protein 1</fullName>
    </alternativeName>
    <alternativeName>
        <fullName>SYT homolog 1</fullName>
    </alternativeName>
</protein>
<organism>
    <name type="scientific">Homo sapiens</name>
    <name type="common">Human</name>
    <dbReference type="NCBI Taxonomy" id="9606"/>
    <lineage>
        <taxon>Eukaryota</taxon>
        <taxon>Metazoa</taxon>
        <taxon>Chordata</taxon>
        <taxon>Craniata</taxon>
        <taxon>Vertebrata</taxon>
        <taxon>Euteleostomi</taxon>
        <taxon>Mammalia</taxon>
        <taxon>Eutheria</taxon>
        <taxon>Euarchontoglires</taxon>
        <taxon>Primates</taxon>
        <taxon>Haplorrhini</taxon>
        <taxon>Catarrhini</taxon>
        <taxon>Hominidae</taxon>
        <taxon>Homo</taxon>
    </lineage>
</organism>
<feature type="chain" id="PRO_0000181825" description="Calcium-responsive transactivator">
    <location>
        <begin position="1"/>
        <end position="396"/>
    </location>
</feature>
<feature type="region of interest" description="N-terminal auto-inhibitory domain; necessary for interaction with SMARCA4/BRG1" evidence="1">
    <location>
        <begin position="1"/>
        <end position="148"/>
    </location>
</feature>
<feature type="region of interest" description="Disordered" evidence="3">
    <location>
        <begin position="72"/>
        <end position="162"/>
    </location>
</feature>
<feature type="region of interest" description="Methionine-rich intra-molecular domain" evidence="1">
    <location>
        <begin position="149"/>
        <end position="232"/>
    </location>
</feature>
<feature type="region of interest" description="Disordered" evidence="3">
    <location>
        <begin position="192"/>
        <end position="280"/>
    </location>
</feature>
<feature type="region of interest" description="MFD domain" evidence="1">
    <location>
        <begin position="246"/>
        <end position="317"/>
    </location>
</feature>
<feature type="region of interest" description="Disordered" evidence="3">
    <location>
        <begin position="311"/>
        <end position="396"/>
    </location>
</feature>
<feature type="region of interest" description="Necessary for nuclear localization" evidence="1">
    <location>
        <begin position="334"/>
        <end position="396"/>
    </location>
</feature>
<feature type="region of interest" description="Necessary for interaction with CREBBP and for the recruitment of CREBBP to the nuclear bodies" evidence="1">
    <location>
        <begin position="387"/>
        <end position="396"/>
    </location>
</feature>
<feature type="short sequence motif" description="SH2-binding" evidence="2">
    <location>
        <begin position="50"/>
        <end position="53"/>
    </location>
</feature>
<feature type="short sequence motif" description="SH2-binding" evidence="2">
    <location>
        <begin position="353"/>
        <end position="356"/>
    </location>
</feature>
<feature type="short sequence motif" description="SH3-binding" evidence="2">
    <location>
        <begin position="371"/>
        <end position="379"/>
    </location>
</feature>
<feature type="short sequence motif" description="SH2-binding" evidence="2">
    <location>
        <begin position="391"/>
        <end position="394"/>
    </location>
</feature>
<feature type="compositionally biased region" description="Low complexity" evidence="3">
    <location>
        <begin position="90"/>
        <end position="106"/>
    </location>
</feature>
<feature type="compositionally biased region" description="Polar residues" evidence="3">
    <location>
        <begin position="107"/>
        <end position="122"/>
    </location>
</feature>
<feature type="compositionally biased region" description="Polar residues" evidence="3">
    <location>
        <begin position="128"/>
        <end position="147"/>
    </location>
</feature>
<feature type="compositionally biased region" description="Low complexity" evidence="3">
    <location>
        <begin position="199"/>
        <end position="229"/>
    </location>
</feature>
<feature type="compositionally biased region" description="Low complexity" evidence="3">
    <location>
        <begin position="238"/>
        <end position="261"/>
    </location>
</feature>
<feature type="compositionally biased region" description="Low complexity" evidence="3">
    <location>
        <begin position="311"/>
        <end position="369"/>
    </location>
</feature>
<feature type="compositionally biased region" description="Low complexity" evidence="3">
    <location>
        <begin position="384"/>
        <end position="396"/>
    </location>
</feature>
<feature type="splice variant" id="VSP_038697" description="In isoform 4." evidence="6">
    <location>
        <begin position="1"/>
        <end position="131"/>
    </location>
</feature>
<feature type="splice variant" id="VSP_038698" description="In isoform 3." evidence="8">
    <location>
        <begin position="1"/>
        <end position="82"/>
    </location>
</feature>
<feature type="splice variant" id="VSP_038699" description="In isoform 5." evidence="7">
    <original>MSVAFASARPRGKGEVTQQTIQKMLDENHHLIQCILEYQSKGKTAECTQ</original>
    <variation>MQSLSTEARYVPRVPQHRDQISPRSPQHGGQICPRSPLHRGQICPRSPPARR</variation>
    <location>
        <begin position="1"/>
        <end position="49"/>
    </location>
</feature>
<feature type="splice variant" id="VSP_038700" description="In isoform 2." evidence="5">
    <original>MSVAFASARPRGKGEVTQQTIQK</original>
    <variation>M</variation>
    <location>
        <begin position="1"/>
        <end position="23"/>
    </location>
</feature>
<feature type="sequence variant" id="VAR_062534" description="In dbSNP:rs17853304." evidence="4">
    <original>M</original>
    <variation>I</variation>
    <location>
        <position position="189"/>
    </location>
</feature>
<feature type="sequence variant" id="VAR_053691" description="In dbSNP:rs36106901.">
    <original>A</original>
    <variation>T</variation>
    <location>
        <position position="321"/>
    </location>
</feature>
<feature type="sequence conflict" description="In Ref. 2; CAE45918." evidence="9" ref="2">
    <original>S</original>
    <variation>G</variation>
    <location>
        <position position="128"/>
    </location>
</feature>
<feature type="sequence conflict" description="In Ref. 4; BAF84174." evidence="9" ref="4">
    <original>T</original>
    <variation>S</variation>
    <location>
        <position position="139"/>
    </location>
</feature>
<feature type="sequence conflict" description="In Ref. 4; BAG54230." evidence="9" ref="4">
    <original>T</original>
    <variation>A</variation>
    <location>
        <position position="143"/>
    </location>
</feature>
<evidence type="ECO:0000250" key="1"/>
<evidence type="ECO:0000255" key="2"/>
<evidence type="ECO:0000256" key="3">
    <source>
        <dbReference type="SAM" id="MobiDB-lite"/>
    </source>
</evidence>
<evidence type="ECO:0000269" key="4">
    <source>
    </source>
</evidence>
<evidence type="ECO:0000303" key="5">
    <source>
    </source>
</evidence>
<evidence type="ECO:0000303" key="6">
    <source>
    </source>
</evidence>
<evidence type="ECO:0000303" key="7">
    <source>
    </source>
</evidence>
<evidence type="ECO:0000303" key="8">
    <source ref="3"/>
</evidence>
<evidence type="ECO:0000305" key="9"/>
<sequence length="396" mass="42990">MSVAFASARPRGKGEVTQQTIQKMLDENHHLIQCILEYQSKGKTAECTQYQQILHRNLVYLATIADSNQNMQSLLPAPPTQNMNLGPGALTQSGSSQGLHSQGSLSDAISTGLPPSSLLQGQIGNGPSHVSMQQTAPNTLPTTSMSISGPGYSHAGPASQGVPMQGQGTIGNYVSRTNINMQSNPVSMMQQQAATSHYSSAQGGSQHYQGQSSIAMMGQGSQGSSMMGQRPMAPYRPSQQGSSQQYLGQEEYYGEQYSHSQGAAEPMGQQYYPDGHGDYAYQQSSYTEQSYDRSFEESTQHYYEGGNSQYSQQQAGYQQGAAQQQTYSQQQYPSQQSYPGQQQGYGSAQGAPSQYPGYQQGQGQQYGSYRAPQTAPSAQQQRPYGYEQGQYGNYQQ</sequence>
<comment type="function">
    <text evidence="1">Transcriptional activator which is required for calcium-dependent dendritic growth and branching in cortical neurons. Recruits CREB-binding protein (CREBBP) to nuclear bodies. Component of the CREST-BRG1 complex, a multiprotein complex that regulates promoter activation by orchestrating a calcium-dependent release of a repressor complex and a recruitment of an activator complex. In resting neurons, transcription of the c-FOS promoter is inhibited by BRG1-dependent recruitment of a phospho-RB1-HDAC1 repressor complex. Upon calcium influx, RB1 is dephosphorylated by calcineurin, which leads to release of the repressor complex. At the same time, there is increased recruitment of CREBBP to the promoter by a CREST-dependent mechanism, which leads to transcriptional activation. The CREST-BRG1 complex also binds to the NR2B promoter, and activity-dependent induction of NR2B expression involves a release of HDAC1 and recruitment of CREBBP (By similarity).</text>
</comment>
<comment type="subunit">
    <text evidence="1">Homodimer. Dimerization may be necessary for its function in neuronal dendritic development. Interacts (via C-terminus) with CREBBP (via N-terminus), EP300 and SMARCA4/BRG1. Interacts with the nBAF complex. Association with CREBBP facilitates transcription while the association with SMARCA4/BRG1 suppresses CREST-mediated transcription in resting neurons (By similarity).</text>
</comment>
<comment type="interaction">
    <interactant intactId="EBI-744674">
        <id>O75177</id>
    </interactant>
    <interactant intactId="EBI-711360">
        <id>P33240</id>
        <label>CSTF2</label>
    </interactant>
    <organismsDiffer>false</organismsDiffer>
    <experiments>3</experiments>
</comment>
<comment type="interaction">
    <interactant intactId="EBI-744674">
        <id>O75177</id>
    </interactant>
    <interactant intactId="EBI-7957930">
        <id>Q92567</id>
        <label>FAM168A</label>
    </interactant>
    <organismsDiffer>false</organismsDiffer>
    <experiments>4</experiments>
</comment>
<comment type="interaction">
    <interactant intactId="EBI-744674">
        <id>O75177</id>
    </interactant>
    <interactant intactId="EBI-16429135">
        <id>A0A0S2Z4Q4</id>
        <label>HGS</label>
    </interactant>
    <organismsDiffer>false</organismsDiffer>
    <experiments>3</experiments>
</comment>
<comment type="interaction">
    <interactant intactId="EBI-744674">
        <id>O75177</id>
    </interactant>
    <interactant intactId="EBI-1170392">
        <id>P17931</id>
        <label>LGALS3</label>
    </interactant>
    <organismsDiffer>false</organismsDiffer>
    <experiments>3</experiments>
</comment>
<comment type="interaction">
    <interactant intactId="EBI-744674">
        <id>O75177</id>
    </interactant>
    <interactant intactId="EBI-10187804">
        <id>Q6NVH9</id>
        <label>LGALS3</label>
    </interactant>
    <organismsDiffer>false</organismsDiffer>
    <experiments>3</experiments>
</comment>
<comment type="interaction">
    <interactant intactId="EBI-744674">
        <id>O75177</id>
    </interactant>
    <interactant intactId="EBI-741424">
        <id>Q8NDC0</id>
        <label>MAPK1IP1L</label>
    </interactant>
    <organismsDiffer>false</organismsDiffer>
    <experiments>3</experiments>
</comment>
<comment type="interaction">
    <interactant intactId="EBI-744674">
        <id>O75177</id>
    </interactant>
    <interactant intactId="EBI-1050253">
        <id>Q96PC5</id>
        <label>MIA2</label>
    </interactant>
    <organismsDiffer>false</organismsDiffer>
    <experiments>3</experiments>
</comment>
<comment type="interaction">
    <interactant intactId="EBI-744674">
        <id>O75177</id>
    </interactant>
    <interactant intactId="EBI-348469">
        <id>Q15427</id>
        <label>SF3B4</label>
    </interactant>
    <organismsDiffer>false</organismsDiffer>
    <experiments>4</experiments>
</comment>
<comment type="interaction">
    <interactant intactId="EBI-744674">
        <id>O75177</id>
    </interactant>
    <interactant intactId="EBI-372475">
        <id>P14678-2</id>
        <label>SNRPB</label>
    </interactant>
    <organismsDiffer>false</organismsDiffer>
    <experiments>3</experiments>
</comment>
<comment type="interaction">
    <interactant intactId="EBI-744674">
        <id>O75177</id>
    </interactant>
    <interactant intactId="EBI-10246938">
        <id>Q5TAL4</id>
        <label>SNRPC</label>
    </interactant>
    <organismsDiffer>false</organismsDiffer>
    <experiments>3</experiments>
</comment>
<comment type="interaction">
    <interactant intactId="EBI-12035119">
        <id>O75177-5</id>
    </interactant>
    <interactant intactId="EBI-11954292">
        <id>Q86V38</id>
        <label>ATN1</label>
    </interactant>
    <organismsDiffer>false</organismsDiffer>
    <experiments>3</experiments>
</comment>
<comment type="interaction">
    <interactant intactId="EBI-12035119">
        <id>O75177-5</id>
    </interactant>
    <interactant intactId="EBI-2949658">
        <id>O95429</id>
        <label>BAG4</label>
    </interactant>
    <organismsDiffer>false</organismsDiffer>
    <experiments>3</experiments>
</comment>
<comment type="interaction">
    <interactant intactId="EBI-12035119">
        <id>O75177-5</id>
    </interactant>
    <interactant intactId="EBI-1012434">
        <id>Q6AI39</id>
        <label>BICRAL</label>
    </interactant>
    <organismsDiffer>false</organismsDiffer>
    <experiments>3</experiments>
</comment>
<comment type="interaction">
    <interactant intactId="EBI-12035119">
        <id>O75177-5</id>
    </interactant>
    <interactant intactId="EBI-946029">
        <id>Q6P1W5</id>
        <label>C1orf94</label>
    </interactant>
    <organismsDiffer>false</organismsDiffer>
    <experiments>3</experiments>
</comment>
<comment type="interaction">
    <interactant intactId="EBI-12035119">
        <id>O75177-5</id>
    </interactant>
    <interactant intactId="EBI-747776">
        <id>Q53EZ4</id>
        <label>CEP55</label>
    </interactant>
    <organismsDiffer>false</organismsDiffer>
    <experiments>3</experiments>
</comment>
<comment type="interaction">
    <interactant intactId="EBI-12035119">
        <id>O75177-5</id>
    </interactant>
    <interactant intactId="EBI-16429135">
        <id>A0A0S2Z4Q4</id>
        <label>HGS</label>
    </interactant>
    <organismsDiffer>false</organismsDiffer>
    <experiments>3</experiments>
</comment>
<comment type="interaction">
    <interactant intactId="EBI-12035119">
        <id>O75177-5</id>
    </interactant>
    <interactant intactId="EBI-740220">
        <id>O14964</id>
        <label>HGS</label>
    </interactant>
    <organismsDiffer>false</organismsDiffer>
    <experiments>3</experiments>
</comment>
<comment type="interaction">
    <interactant intactId="EBI-12035119">
        <id>O75177-5</id>
    </interactant>
    <interactant intactId="EBI-1055254">
        <id>Q8WXH2</id>
        <label>JPH3</label>
    </interactant>
    <organismsDiffer>false</organismsDiffer>
    <experiments>3</experiments>
</comment>
<comment type="interaction">
    <interactant intactId="EBI-12035119">
        <id>O75177-5</id>
    </interactant>
    <interactant intactId="EBI-741424">
        <id>Q8NDC0</id>
        <label>MAPK1IP1L</label>
    </interactant>
    <organismsDiffer>false</organismsDiffer>
    <experiments>3</experiments>
</comment>
<comment type="interaction">
    <interactant intactId="EBI-12035119">
        <id>O75177-5</id>
    </interactant>
    <interactant intactId="EBI-2515597">
        <id>Q96HR8</id>
        <label>NAF1</label>
    </interactant>
    <organismsDiffer>false</organismsDiffer>
    <experiments>3</experiments>
</comment>
<comment type="interaction">
    <interactant intactId="EBI-12035119">
        <id>O75177-5</id>
    </interactant>
    <interactant intactId="EBI-2683132">
        <id>Q06710</id>
        <label>PAX8</label>
    </interactant>
    <organismsDiffer>false</organismsDiffer>
    <experiments>3</experiments>
</comment>
<comment type="interaction">
    <interactant intactId="EBI-12035119">
        <id>O75177-5</id>
    </interactant>
    <interactant intactId="EBI-746118">
        <id>Q8HWS3</id>
        <label>RFX6</label>
    </interactant>
    <organismsDiffer>false</organismsDiffer>
    <experiments>3</experiments>
</comment>
<comment type="interaction">
    <interactant intactId="EBI-12035119">
        <id>O75177-5</id>
    </interactant>
    <interactant intactId="EBI-348469">
        <id>Q15427</id>
        <label>SF3B4</label>
    </interactant>
    <organismsDiffer>false</organismsDiffer>
    <experiments>3</experiments>
</comment>
<comment type="interaction">
    <interactant intactId="EBI-12035119">
        <id>O75177-5</id>
    </interactant>
    <interactant intactId="EBI-2902395">
        <id>Q9BWW4</id>
        <label>SSBP3</label>
    </interactant>
    <organismsDiffer>false</organismsDiffer>
    <experiments>3</experiments>
</comment>
<comment type="interaction">
    <interactant intactId="EBI-12035119">
        <id>O75177-5</id>
    </interactant>
    <interactant intactId="EBI-11018037">
        <id>Q13470-2</id>
        <label>TNK1</label>
    </interactant>
    <organismsDiffer>false</organismsDiffer>
    <experiments>3</experiments>
</comment>
<comment type="interaction">
    <interactant intactId="EBI-12035119">
        <id>O75177-5</id>
    </interactant>
    <interactant intactId="EBI-11975223">
        <id>Q70EL1-9</id>
        <label>USP54</label>
    </interactant>
    <organismsDiffer>false</organismsDiffer>
    <experiments>3</experiments>
</comment>
<comment type="interaction">
    <interactant intactId="EBI-12035119">
        <id>O75177-5</id>
    </interactant>
    <interactant intactId="EBI-12011330">
        <id>Q8NF64-3</id>
        <label>ZMIZ2</label>
    </interactant>
    <organismsDiffer>false</organismsDiffer>
    <experiments>3</experiments>
</comment>
<comment type="interaction">
    <interactant intactId="EBI-12035119">
        <id>O75177-5</id>
    </interactant>
    <interactant intactId="EBI-746595">
        <id>Q96E35</id>
        <label>ZMYND19</label>
    </interactant>
    <organismsDiffer>false</organismsDiffer>
    <experiments>3</experiments>
</comment>
<comment type="subcellular location">
    <subcellularLocation>
        <location evidence="1">Nucleus</location>
    </subcellularLocation>
    <subcellularLocation>
        <location evidence="1">Chromosome</location>
        <location evidence="1">Centromere</location>
        <location evidence="1">Kinetochore</location>
    </subcellularLocation>
    <text evidence="1">Localizes to nuclear bodies. Colocalizes with SGO1 at kinetochore (By similarity).</text>
</comment>
<comment type="alternative products">
    <event type="alternative splicing"/>
    <isoform>
        <id>O75177-1</id>
        <name>1</name>
        <sequence type="displayed"/>
    </isoform>
    <isoform>
        <id>O75177-2</id>
        <name>2</name>
        <sequence type="described" ref="VSP_038700"/>
    </isoform>
    <isoform>
        <id>O75177-3</id>
        <name>3</name>
        <sequence type="described" ref="VSP_038698"/>
    </isoform>
    <isoform>
        <id>O75177-4</id>
        <name>4</name>
        <sequence type="described" ref="VSP_038697"/>
    </isoform>
    <isoform>
        <id>O75177-5</id>
        <name>5</name>
        <sequence type="described" ref="VSP_038699"/>
    </isoform>
</comment>
<comment type="tissue specificity">
    <text>Ubiquitous; with lowest levels in spleen.</text>
</comment>
<comment type="domain">
    <text evidence="1">The MFD (multi-functional domain) domain is involved in transcription transactivation, nuclear body targeting and dimerization.</text>
</comment>
<comment type="similarity">
    <text evidence="9">Belongs to the SS18 family.</text>
</comment>
<comment type="sequence caution" evidence="9">
    <conflict type="erroneous initiation">
        <sequence resource="EMBL-CDS" id="BAA31668"/>
    </conflict>
</comment>
<comment type="online information" name="Atlas of Genetics and Cytogenetics in Oncology and Haematology">
    <link uri="https://atlasgeneticsoncology.org/gene/474/SS18L1"/>
</comment>
<keyword id="KW-0010">Activator</keyword>
<keyword id="KW-0025">Alternative splicing</keyword>
<keyword id="KW-0106">Calcium</keyword>
<keyword id="KW-0137">Centromere</keyword>
<keyword id="KW-0156">Chromatin regulator</keyword>
<keyword id="KW-0158">Chromosome</keyword>
<keyword id="KW-0995">Kinetochore</keyword>
<keyword id="KW-0539">Nucleus</keyword>
<keyword id="KW-1267">Proteomics identification</keyword>
<keyword id="KW-1185">Reference proteome</keyword>
<keyword id="KW-0677">Repeat</keyword>
<keyword id="KW-0804">Transcription</keyword>
<keyword id="KW-0805">Transcription regulation</keyword>
<gene>
    <name type="primary">SS18L1</name>
    <name type="synonym">CREST</name>
    <name type="synonym">KIAA0693</name>
</gene>
<dbReference type="EMBL" id="AB014593">
    <property type="protein sequence ID" value="BAA31668.1"/>
    <property type="status" value="ALT_INIT"/>
    <property type="molecule type" value="mRNA"/>
</dbReference>
<dbReference type="EMBL" id="BX640848">
    <property type="protein sequence ID" value="CAE45918.1"/>
    <property type="molecule type" value="mRNA"/>
</dbReference>
<dbReference type="EMBL" id="AY203931">
    <property type="protein sequence ID" value="AAP34454.1"/>
    <property type="molecule type" value="mRNA"/>
</dbReference>
<dbReference type="EMBL" id="AK125656">
    <property type="protein sequence ID" value="BAG54230.1"/>
    <property type="molecule type" value="mRNA"/>
</dbReference>
<dbReference type="EMBL" id="AK291485">
    <property type="protein sequence ID" value="BAF84174.1"/>
    <property type="molecule type" value="mRNA"/>
</dbReference>
<dbReference type="EMBL" id="AL078633">
    <property type="status" value="NOT_ANNOTATED_CDS"/>
    <property type="molecule type" value="Genomic_DNA"/>
</dbReference>
<dbReference type="EMBL" id="CH471077">
    <property type="protein sequence ID" value="EAW75393.1"/>
    <property type="molecule type" value="Genomic_DNA"/>
</dbReference>
<dbReference type="EMBL" id="CH471077">
    <property type="protein sequence ID" value="EAW75392.1"/>
    <property type="molecule type" value="Genomic_DNA"/>
</dbReference>
<dbReference type="EMBL" id="CH471077">
    <property type="protein sequence ID" value="EAW75395.1"/>
    <property type="molecule type" value="Genomic_DNA"/>
</dbReference>
<dbReference type="EMBL" id="BC034494">
    <property type="protein sequence ID" value="AAH34494.1"/>
    <property type="molecule type" value="mRNA"/>
</dbReference>
<dbReference type="EMBL" id="BC068993">
    <property type="protein sequence ID" value="AAH68993.1"/>
    <property type="molecule type" value="mRNA"/>
</dbReference>
<dbReference type="CCDS" id="CCDS13491.1">
    <molecule id="O75177-1"/>
</dbReference>
<dbReference type="RefSeq" id="NP_001288707.1">
    <molecule id="O75177-4"/>
    <property type="nucleotide sequence ID" value="NM_001301778.2"/>
</dbReference>
<dbReference type="RefSeq" id="NP_945173.1">
    <molecule id="O75177-1"/>
    <property type="nucleotide sequence ID" value="NM_198935.3"/>
</dbReference>
<dbReference type="RefSeq" id="XP_005260448.1">
    <property type="nucleotide sequence ID" value="XM_005260391.1"/>
</dbReference>
<dbReference type="RefSeq" id="XP_011527066.1">
    <property type="nucleotide sequence ID" value="XM_011528764.2"/>
</dbReference>
<dbReference type="RefSeq" id="XP_011527069.1">
    <molecule id="O75177-5"/>
    <property type="nucleotide sequence ID" value="XM_011528767.2"/>
</dbReference>
<dbReference type="RefSeq" id="XP_047296039.1">
    <molecule id="O75177-2"/>
    <property type="nucleotide sequence ID" value="XM_047440083.1"/>
</dbReference>
<dbReference type="RefSeq" id="XP_047296040.1">
    <molecule id="O75177-2"/>
    <property type="nucleotide sequence ID" value="XM_047440084.1"/>
</dbReference>
<dbReference type="RefSeq" id="XP_047296041.1">
    <molecule id="O75177-3"/>
    <property type="nucleotide sequence ID" value="XM_047440085.1"/>
</dbReference>
<dbReference type="RefSeq" id="XP_054179296.1">
    <molecule id="O75177-2"/>
    <property type="nucleotide sequence ID" value="XM_054323321.1"/>
</dbReference>
<dbReference type="RefSeq" id="XP_054179297.1">
    <molecule id="O75177-2"/>
    <property type="nucleotide sequence ID" value="XM_054323322.1"/>
</dbReference>
<dbReference type="RefSeq" id="XP_054179299.1">
    <molecule id="O75177-3"/>
    <property type="nucleotide sequence ID" value="XM_054323324.1"/>
</dbReference>
<dbReference type="RefSeq" id="XP_054179300.1">
    <molecule id="O75177-5"/>
    <property type="nucleotide sequence ID" value="XM_054323325.1"/>
</dbReference>
<dbReference type="SMR" id="O75177"/>
<dbReference type="BioGRID" id="117505">
    <property type="interactions" value="105"/>
</dbReference>
<dbReference type="FunCoup" id="O75177">
    <property type="interactions" value="2382"/>
</dbReference>
<dbReference type="IntAct" id="O75177">
    <property type="interactions" value="69"/>
</dbReference>
<dbReference type="MINT" id="O75177"/>
<dbReference type="STRING" id="9606.ENSP00000333012"/>
<dbReference type="GlyGen" id="O75177">
    <property type="glycosylation" value="1 site, 1 O-linked glycan (1 site)"/>
</dbReference>
<dbReference type="iPTMnet" id="O75177"/>
<dbReference type="PhosphoSitePlus" id="O75177"/>
<dbReference type="BioMuta" id="SS18L1"/>
<dbReference type="jPOST" id="O75177"/>
<dbReference type="MassIVE" id="O75177"/>
<dbReference type="PaxDb" id="9606-ENSP00000333012"/>
<dbReference type="PeptideAtlas" id="O75177"/>
<dbReference type="ProteomicsDB" id="49845">
    <molecule id="O75177-1"/>
</dbReference>
<dbReference type="ProteomicsDB" id="49846">
    <molecule id="O75177-2"/>
</dbReference>
<dbReference type="ProteomicsDB" id="49847">
    <molecule id="O75177-3"/>
</dbReference>
<dbReference type="ProteomicsDB" id="49848">
    <molecule id="O75177-4"/>
</dbReference>
<dbReference type="ProteomicsDB" id="49849">
    <molecule id="O75177-5"/>
</dbReference>
<dbReference type="Pumba" id="O75177"/>
<dbReference type="Antibodypedia" id="44341">
    <property type="antibodies" value="154 antibodies from 23 providers"/>
</dbReference>
<dbReference type="DNASU" id="26039"/>
<dbReference type="Ensembl" id="ENST00000331758.8">
    <molecule id="O75177-1"/>
    <property type="protein sequence ID" value="ENSP00000333012.3"/>
    <property type="gene ID" value="ENSG00000184402.15"/>
</dbReference>
<dbReference type="Ensembl" id="ENST00000370848.8">
    <molecule id="O75177-3"/>
    <property type="protein sequence ID" value="ENSP00000359885.5"/>
    <property type="gene ID" value="ENSG00000184402.15"/>
</dbReference>
<dbReference type="GeneID" id="26039"/>
<dbReference type="KEGG" id="hsa:26039"/>
<dbReference type="MANE-Select" id="ENST00000331758.8">
    <property type="protein sequence ID" value="ENSP00000333012.3"/>
    <property type="RefSeq nucleotide sequence ID" value="NM_198935.3"/>
    <property type="RefSeq protein sequence ID" value="NP_945173.1"/>
</dbReference>
<dbReference type="UCSC" id="uc002ycb.4">
    <molecule id="O75177-1"/>
    <property type="organism name" value="human"/>
</dbReference>
<dbReference type="AGR" id="HGNC:15592"/>
<dbReference type="CTD" id="26039"/>
<dbReference type="DisGeNET" id="26039"/>
<dbReference type="GeneCards" id="SS18L1"/>
<dbReference type="HGNC" id="HGNC:15592">
    <property type="gene designation" value="SS18L1"/>
</dbReference>
<dbReference type="HPA" id="ENSG00000184402">
    <property type="expression patterns" value="Low tissue specificity"/>
</dbReference>
<dbReference type="MalaCards" id="SS18L1"/>
<dbReference type="MIM" id="606472">
    <property type="type" value="gene"/>
</dbReference>
<dbReference type="neXtProt" id="NX_O75177"/>
<dbReference type="OpenTargets" id="ENSG00000184402"/>
<dbReference type="PharmGKB" id="PA37989"/>
<dbReference type="VEuPathDB" id="HostDB:ENSG00000184402"/>
<dbReference type="eggNOG" id="KOG3227">
    <property type="taxonomic scope" value="Eukaryota"/>
</dbReference>
<dbReference type="GeneTree" id="ENSGT00940000159853"/>
<dbReference type="HOGENOM" id="CLU_054580_1_0_1"/>
<dbReference type="InParanoid" id="O75177"/>
<dbReference type="OMA" id="ASEPMNQ"/>
<dbReference type="OrthoDB" id="10265171at2759"/>
<dbReference type="PAN-GO" id="O75177">
    <property type="GO annotations" value="3 GO annotations based on evolutionary models"/>
</dbReference>
<dbReference type="PhylomeDB" id="O75177"/>
<dbReference type="TreeFam" id="TF330999"/>
<dbReference type="PathwayCommons" id="O75177"/>
<dbReference type="Reactome" id="R-HSA-9824585">
    <property type="pathway name" value="Regulation of MITF-M-dependent genes involved in pigmentation"/>
</dbReference>
<dbReference type="Reactome" id="R-HSA-9845323">
    <property type="pathway name" value="Regulation of endogenous retroelements by Piwi-interacting RNAs (piRNAs)"/>
</dbReference>
<dbReference type="SignaLink" id="O75177"/>
<dbReference type="SIGNOR" id="O75177"/>
<dbReference type="BioGRID-ORCS" id="26039">
    <property type="hits" value="11 hits in 1157 CRISPR screens"/>
</dbReference>
<dbReference type="CD-CODE" id="1A18FFC4">
    <property type="entry name" value="Paraspeckle"/>
</dbReference>
<dbReference type="ChiTaRS" id="SS18L1">
    <property type="organism name" value="human"/>
</dbReference>
<dbReference type="GeneWiki" id="SS18L1"/>
<dbReference type="GenomeRNAi" id="26039"/>
<dbReference type="Pharos" id="O75177">
    <property type="development level" value="Tbio"/>
</dbReference>
<dbReference type="PRO" id="PR:O75177"/>
<dbReference type="Proteomes" id="UP000005640">
    <property type="component" value="Chromosome 20"/>
</dbReference>
<dbReference type="RNAct" id="O75177">
    <property type="molecule type" value="protein"/>
</dbReference>
<dbReference type="Bgee" id="ENSG00000184402">
    <property type="expression patterns" value="Expressed in lateral nuclear group of thalamus and 208 other cell types or tissues"/>
</dbReference>
<dbReference type="ExpressionAtlas" id="O75177">
    <property type="expression patterns" value="baseline and differential"/>
</dbReference>
<dbReference type="GO" id="GO:0005829">
    <property type="term" value="C:cytosol"/>
    <property type="evidence" value="ECO:0000314"/>
    <property type="project" value="HPA"/>
</dbReference>
<dbReference type="GO" id="GO:0000776">
    <property type="term" value="C:kinetochore"/>
    <property type="evidence" value="ECO:0000314"/>
    <property type="project" value="MGI"/>
</dbReference>
<dbReference type="GO" id="GO:0071565">
    <property type="term" value="C:nBAF complex"/>
    <property type="evidence" value="ECO:0007669"/>
    <property type="project" value="Ensembl"/>
</dbReference>
<dbReference type="GO" id="GO:0005654">
    <property type="term" value="C:nucleoplasm"/>
    <property type="evidence" value="ECO:0000314"/>
    <property type="project" value="HPA"/>
</dbReference>
<dbReference type="GO" id="GO:0005634">
    <property type="term" value="C:nucleus"/>
    <property type="evidence" value="ECO:0000250"/>
    <property type="project" value="UniProtKB"/>
</dbReference>
<dbReference type="GO" id="GO:0003713">
    <property type="term" value="F:transcription coactivator activity"/>
    <property type="evidence" value="ECO:0000318"/>
    <property type="project" value="GO_Central"/>
</dbReference>
<dbReference type="GO" id="GO:0006325">
    <property type="term" value="P:chromatin organization"/>
    <property type="evidence" value="ECO:0007669"/>
    <property type="project" value="UniProtKB-KW"/>
</dbReference>
<dbReference type="GO" id="GO:0016358">
    <property type="term" value="P:dendrite development"/>
    <property type="evidence" value="ECO:0007669"/>
    <property type="project" value="Ensembl"/>
</dbReference>
<dbReference type="GO" id="GO:0050775">
    <property type="term" value="P:positive regulation of dendrite morphogenesis"/>
    <property type="evidence" value="ECO:0000318"/>
    <property type="project" value="GO_Central"/>
</dbReference>
<dbReference type="GO" id="GO:0045893">
    <property type="term" value="P:positive regulation of DNA-templated transcription"/>
    <property type="evidence" value="ECO:0000250"/>
    <property type="project" value="UniProtKB"/>
</dbReference>
<dbReference type="GO" id="GO:0045944">
    <property type="term" value="P:positive regulation of transcription by RNA polymerase II"/>
    <property type="evidence" value="ECO:0000318"/>
    <property type="project" value="GO_Central"/>
</dbReference>
<dbReference type="InterPro" id="IPR007726">
    <property type="entry name" value="SS18_N"/>
</dbReference>
<dbReference type="PANTHER" id="PTHR23107:SF21">
    <property type="entry name" value="CALCIUM-RESPONSIVE TRANSACTIVATOR"/>
    <property type="match status" value="1"/>
</dbReference>
<dbReference type="PANTHER" id="PTHR23107">
    <property type="entry name" value="SYNOVIAL SARCOMA ASSOCIATED SS18 PROTEIN"/>
    <property type="match status" value="1"/>
</dbReference>
<dbReference type="Pfam" id="PF05030">
    <property type="entry name" value="SSXT"/>
    <property type="match status" value="1"/>
</dbReference>